<proteinExistence type="inferred from homology"/>
<dbReference type="EMBL" id="AL513382">
    <property type="protein sequence ID" value="CAD01812.1"/>
    <property type="molecule type" value="Genomic_DNA"/>
</dbReference>
<dbReference type="EMBL" id="AE014613">
    <property type="protein sequence ID" value="AAO69065.1"/>
    <property type="molecule type" value="Genomic_DNA"/>
</dbReference>
<dbReference type="RefSeq" id="NP_455979.1">
    <property type="nucleotide sequence ID" value="NC_003198.1"/>
</dbReference>
<dbReference type="RefSeq" id="WP_000743128.1">
    <property type="nucleotide sequence ID" value="NZ_WSUR01000006.1"/>
</dbReference>
<dbReference type="SMR" id="Q8Z6Z0"/>
<dbReference type="KEGG" id="stt:t1422"/>
<dbReference type="KEGG" id="sty:STY1562"/>
<dbReference type="PATRIC" id="fig|220341.7.peg.1571"/>
<dbReference type="eggNOG" id="ENOG502Z8TA">
    <property type="taxonomic scope" value="Bacteria"/>
</dbReference>
<dbReference type="HOGENOM" id="CLU_1174761_0_0_6"/>
<dbReference type="OMA" id="WDTDDNG"/>
<dbReference type="OrthoDB" id="6622075at2"/>
<dbReference type="Proteomes" id="UP000000541">
    <property type="component" value="Chromosome"/>
</dbReference>
<dbReference type="Proteomes" id="UP000002670">
    <property type="component" value="Chromosome"/>
</dbReference>
<dbReference type="GO" id="GO:0005886">
    <property type="term" value="C:plasma membrane"/>
    <property type="evidence" value="ECO:0007669"/>
    <property type="project" value="UniProtKB-SubCell"/>
</dbReference>
<dbReference type="HAMAP" id="MF_01065">
    <property type="entry name" value="UPF0257"/>
    <property type="match status" value="1"/>
</dbReference>
<dbReference type="InterPro" id="IPR010646">
    <property type="entry name" value="UPF0257"/>
</dbReference>
<dbReference type="NCBIfam" id="NF002798">
    <property type="entry name" value="PRK02939.1"/>
    <property type="match status" value="1"/>
</dbReference>
<dbReference type="Pfam" id="PF06788">
    <property type="entry name" value="UPF0257"/>
    <property type="match status" value="1"/>
</dbReference>
<dbReference type="PROSITE" id="PS51257">
    <property type="entry name" value="PROKAR_LIPOPROTEIN"/>
    <property type="match status" value="1"/>
</dbReference>
<evidence type="ECO:0000255" key="1">
    <source>
        <dbReference type="HAMAP-Rule" id="MF_01065"/>
    </source>
</evidence>
<name>YNFC_SALTI</name>
<comment type="subcellular location">
    <subcellularLocation>
        <location evidence="1">Cell membrane</location>
        <topology evidence="1">Lipid-anchor</topology>
    </subcellularLocation>
</comment>
<comment type="similarity">
    <text evidence="1">Belongs to the UPF0257 family.</text>
</comment>
<gene>
    <name evidence="1" type="primary">ynfC</name>
    <name type="ordered locus">STY1562</name>
    <name type="ordered locus">t1422</name>
</gene>
<feature type="signal peptide" evidence="1">
    <location>
        <begin position="1"/>
        <end position="16"/>
    </location>
</feature>
<feature type="chain" id="PRO_0000036264" description="UPF0257 lipoprotein YnfC">
    <location>
        <begin position="17"/>
        <end position="236"/>
    </location>
</feature>
<feature type="lipid moiety-binding region" description="N-palmitoyl cysteine" evidence="1">
    <location>
        <position position="17"/>
    </location>
</feature>
<feature type="lipid moiety-binding region" description="S-diacylglycerol cysteine" evidence="1">
    <location>
        <position position="17"/>
    </location>
</feature>
<protein>
    <recommendedName>
        <fullName evidence="1">UPF0257 lipoprotein YnfC</fullName>
    </recommendedName>
</protein>
<sequence length="236" mass="26222">MKKPLLLTLLCMILAGCDNPKSPESFTPEMASFSNEFDFDPLRGPVKDFSQTLMSENGEVAKQVTGTLSQEGCFDTLELHDLENNTGLALVLDANYYRDAQTLEKKVQLQGKCQLAALPSAGVTWETDDNGFVVSATGKEMKVEYRYDSEGYPLGKTTINSQNTLSVTAKLSTDSRKKLDYTAVSRVDDRQVGNVTQSCEYDAYANPVDCRLVIVDESVKPAVSHHYTIKNRIDYY</sequence>
<reference key="1">
    <citation type="journal article" date="2001" name="Nature">
        <title>Complete genome sequence of a multiple drug resistant Salmonella enterica serovar Typhi CT18.</title>
        <authorList>
            <person name="Parkhill J."/>
            <person name="Dougan G."/>
            <person name="James K.D."/>
            <person name="Thomson N.R."/>
            <person name="Pickard D."/>
            <person name="Wain J."/>
            <person name="Churcher C.M."/>
            <person name="Mungall K.L."/>
            <person name="Bentley S.D."/>
            <person name="Holden M.T.G."/>
            <person name="Sebaihia M."/>
            <person name="Baker S."/>
            <person name="Basham D."/>
            <person name="Brooks K."/>
            <person name="Chillingworth T."/>
            <person name="Connerton P."/>
            <person name="Cronin A."/>
            <person name="Davis P."/>
            <person name="Davies R.M."/>
            <person name="Dowd L."/>
            <person name="White N."/>
            <person name="Farrar J."/>
            <person name="Feltwell T."/>
            <person name="Hamlin N."/>
            <person name="Haque A."/>
            <person name="Hien T.T."/>
            <person name="Holroyd S."/>
            <person name="Jagels K."/>
            <person name="Krogh A."/>
            <person name="Larsen T.S."/>
            <person name="Leather S."/>
            <person name="Moule S."/>
            <person name="O'Gaora P."/>
            <person name="Parry C."/>
            <person name="Quail M.A."/>
            <person name="Rutherford K.M."/>
            <person name="Simmonds M."/>
            <person name="Skelton J."/>
            <person name="Stevens K."/>
            <person name="Whitehead S."/>
            <person name="Barrell B.G."/>
        </authorList>
    </citation>
    <scope>NUCLEOTIDE SEQUENCE [LARGE SCALE GENOMIC DNA]</scope>
    <source>
        <strain>CT18</strain>
    </source>
</reference>
<reference key="2">
    <citation type="journal article" date="2003" name="J. Bacteriol.">
        <title>Comparative genomics of Salmonella enterica serovar Typhi strains Ty2 and CT18.</title>
        <authorList>
            <person name="Deng W."/>
            <person name="Liou S.-R."/>
            <person name="Plunkett G. III"/>
            <person name="Mayhew G.F."/>
            <person name="Rose D.J."/>
            <person name="Burland V."/>
            <person name="Kodoyianni V."/>
            <person name="Schwartz D.C."/>
            <person name="Blattner F.R."/>
        </authorList>
    </citation>
    <scope>NUCLEOTIDE SEQUENCE [LARGE SCALE GENOMIC DNA]</scope>
    <source>
        <strain>ATCC 700931 / Ty2</strain>
    </source>
</reference>
<organism>
    <name type="scientific">Salmonella typhi</name>
    <dbReference type="NCBI Taxonomy" id="90370"/>
    <lineage>
        <taxon>Bacteria</taxon>
        <taxon>Pseudomonadati</taxon>
        <taxon>Pseudomonadota</taxon>
        <taxon>Gammaproteobacteria</taxon>
        <taxon>Enterobacterales</taxon>
        <taxon>Enterobacteriaceae</taxon>
        <taxon>Salmonella</taxon>
    </lineage>
</organism>
<keyword id="KW-1003">Cell membrane</keyword>
<keyword id="KW-0449">Lipoprotein</keyword>
<keyword id="KW-0472">Membrane</keyword>
<keyword id="KW-0564">Palmitate</keyword>
<keyword id="KW-0732">Signal</keyword>
<accession>Q8Z6Z0</accession>